<gene>
    <name evidence="1" type="primary">lgt</name>
    <name type="ordered locus">blr7444</name>
</gene>
<dbReference type="EC" id="2.5.1.145" evidence="1"/>
<dbReference type="EMBL" id="BA000040">
    <property type="protein sequence ID" value="BAC52709.1"/>
    <property type="molecule type" value="Genomic_DNA"/>
</dbReference>
<dbReference type="RefSeq" id="NP_774084.1">
    <property type="nucleotide sequence ID" value="NC_004463.1"/>
</dbReference>
<dbReference type="SMR" id="Q89DJ5"/>
<dbReference type="FunCoup" id="Q89DJ5">
    <property type="interactions" value="439"/>
</dbReference>
<dbReference type="STRING" id="224911.AAV28_34910"/>
<dbReference type="EnsemblBacteria" id="BAC52709">
    <property type="protein sequence ID" value="BAC52709"/>
    <property type="gene ID" value="BAC52709"/>
</dbReference>
<dbReference type="KEGG" id="bja:blr7444"/>
<dbReference type="PATRIC" id="fig|224911.5.peg.7663"/>
<dbReference type="eggNOG" id="COG0682">
    <property type="taxonomic scope" value="Bacteria"/>
</dbReference>
<dbReference type="HOGENOM" id="CLU_013386_1_0_5"/>
<dbReference type="InParanoid" id="Q89DJ5"/>
<dbReference type="OrthoDB" id="871140at2"/>
<dbReference type="PhylomeDB" id="Q89DJ5"/>
<dbReference type="UniPathway" id="UPA00664"/>
<dbReference type="Proteomes" id="UP000002526">
    <property type="component" value="Chromosome"/>
</dbReference>
<dbReference type="GO" id="GO:0005886">
    <property type="term" value="C:plasma membrane"/>
    <property type="evidence" value="ECO:0000318"/>
    <property type="project" value="GO_Central"/>
</dbReference>
<dbReference type="GO" id="GO:0008961">
    <property type="term" value="F:phosphatidylglycerol-prolipoprotein diacylglyceryl transferase activity"/>
    <property type="evidence" value="ECO:0000318"/>
    <property type="project" value="GO_Central"/>
</dbReference>
<dbReference type="GO" id="GO:0042158">
    <property type="term" value="P:lipoprotein biosynthetic process"/>
    <property type="evidence" value="ECO:0000318"/>
    <property type="project" value="GO_Central"/>
</dbReference>
<dbReference type="HAMAP" id="MF_01147">
    <property type="entry name" value="Lgt"/>
    <property type="match status" value="1"/>
</dbReference>
<dbReference type="InterPro" id="IPR001640">
    <property type="entry name" value="Lgt"/>
</dbReference>
<dbReference type="NCBIfam" id="TIGR00544">
    <property type="entry name" value="lgt"/>
    <property type="match status" value="1"/>
</dbReference>
<dbReference type="PANTHER" id="PTHR30589:SF0">
    <property type="entry name" value="PHOSPHATIDYLGLYCEROL--PROLIPOPROTEIN DIACYLGLYCERYL TRANSFERASE"/>
    <property type="match status" value="1"/>
</dbReference>
<dbReference type="PANTHER" id="PTHR30589">
    <property type="entry name" value="PROLIPOPROTEIN DIACYLGLYCERYL TRANSFERASE"/>
    <property type="match status" value="1"/>
</dbReference>
<dbReference type="Pfam" id="PF01790">
    <property type="entry name" value="LGT"/>
    <property type="match status" value="1"/>
</dbReference>
<dbReference type="PROSITE" id="PS01311">
    <property type="entry name" value="LGT"/>
    <property type="match status" value="1"/>
</dbReference>
<accession>Q89DJ5</accession>
<evidence type="ECO:0000255" key="1">
    <source>
        <dbReference type="HAMAP-Rule" id="MF_01147"/>
    </source>
</evidence>
<feature type="chain" id="PRO_0000172567" description="Phosphatidylglycerol--prolipoprotein diacylglyceryl transferase">
    <location>
        <begin position="1"/>
        <end position="282"/>
    </location>
</feature>
<feature type="transmembrane region" description="Helical" evidence="1">
    <location>
        <begin position="19"/>
        <end position="39"/>
    </location>
</feature>
<feature type="transmembrane region" description="Helical" evidence="1">
    <location>
        <begin position="58"/>
        <end position="78"/>
    </location>
</feature>
<feature type="transmembrane region" description="Helical" evidence="1">
    <location>
        <begin position="104"/>
        <end position="124"/>
    </location>
</feature>
<feature type="transmembrane region" description="Helical" evidence="1">
    <location>
        <begin position="190"/>
        <end position="210"/>
    </location>
</feature>
<feature type="transmembrane region" description="Helical" evidence="1">
    <location>
        <begin position="214"/>
        <end position="234"/>
    </location>
</feature>
<feature type="transmembrane region" description="Helical" evidence="1">
    <location>
        <begin position="250"/>
        <end position="270"/>
    </location>
</feature>
<feature type="binding site" evidence="1">
    <location>
        <position position="149"/>
    </location>
    <ligand>
        <name>a 1,2-diacyl-sn-glycero-3-phospho-(1'-sn-glycerol)</name>
        <dbReference type="ChEBI" id="CHEBI:64716"/>
    </ligand>
</feature>
<name>LGT_BRADU</name>
<keyword id="KW-0997">Cell inner membrane</keyword>
<keyword id="KW-1003">Cell membrane</keyword>
<keyword id="KW-0472">Membrane</keyword>
<keyword id="KW-1185">Reference proteome</keyword>
<keyword id="KW-0808">Transferase</keyword>
<keyword id="KW-0812">Transmembrane</keyword>
<keyword id="KW-1133">Transmembrane helix</keyword>
<reference key="1">
    <citation type="journal article" date="2002" name="DNA Res.">
        <title>Complete genomic sequence of nitrogen-fixing symbiotic bacterium Bradyrhizobium japonicum USDA110.</title>
        <authorList>
            <person name="Kaneko T."/>
            <person name="Nakamura Y."/>
            <person name="Sato S."/>
            <person name="Minamisawa K."/>
            <person name="Uchiumi T."/>
            <person name="Sasamoto S."/>
            <person name="Watanabe A."/>
            <person name="Idesawa K."/>
            <person name="Iriguchi M."/>
            <person name="Kawashima K."/>
            <person name="Kohara M."/>
            <person name="Matsumoto M."/>
            <person name="Shimpo S."/>
            <person name="Tsuruoka H."/>
            <person name="Wada T."/>
            <person name="Yamada M."/>
            <person name="Tabata S."/>
        </authorList>
    </citation>
    <scope>NUCLEOTIDE SEQUENCE [LARGE SCALE GENOMIC DNA]</scope>
    <source>
        <strain>JCM 10833 / BCRC 13528 / IAM 13628 / NBRC 14792 / USDA 110</strain>
    </source>
</reference>
<protein>
    <recommendedName>
        <fullName evidence="1">Phosphatidylglycerol--prolipoprotein diacylglyceryl transferase</fullName>
        <ecNumber evidence="1">2.5.1.145</ecNumber>
    </recommendedName>
</protein>
<organism>
    <name type="scientific">Bradyrhizobium diazoefficiens (strain JCM 10833 / BCRC 13528 / IAM 13628 / NBRC 14792 / USDA 110)</name>
    <dbReference type="NCBI Taxonomy" id="224911"/>
    <lineage>
        <taxon>Bacteria</taxon>
        <taxon>Pseudomonadati</taxon>
        <taxon>Pseudomonadota</taxon>
        <taxon>Alphaproteobacteria</taxon>
        <taxon>Hyphomicrobiales</taxon>
        <taxon>Nitrobacteraceae</taxon>
        <taxon>Bradyrhizobium</taxon>
    </lineage>
</organism>
<proteinExistence type="inferred from homology"/>
<sequence>MMPFLLIDFPAFKPIAIEIGPFAIRWYALAYICGIVFGWLYARSLLKNERLWGGPAPISLVQVDDFILWVTLGIILGGRTGYVLFYNLPFFIEHPAAIFRLWEGGMSFHGGFLGCVVAVMWFAYRNGIPILSLGDITTAVAPVGLLLGRIANFINGELWGRATDASLPWAMVFPNDPTQLPRHPSQLYEAGMEGILLFTVLAIMIRLGALKRPGMILGAFILIYGLTRIAGEHFREPDVQLGFLWGGLTMGMLLSIPMLIVGLILIVLAIRRGAPRPIEAIR</sequence>
<comment type="function">
    <text evidence="1">Catalyzes the transfer of the diacylglyceryl group from phosphatidylglycerol to the sulfhydryl group of the N-terminal cysteine of a prolipoprotein, the first step in the formation of mature lipoproteins.</text>
</comment>
<comment type="catalytic activity">
    <reaction evidence="1">
        <text>L-cysteinyl-[prolipoprotein] + a 1,2-diacyl-sn-glycero-3-phospho-(1'-sn-glycerol) = an S-1,2-diacyl-sn-glyceryl-L-cysteinyl-[prolipoprotein] + sn-glycerol 1-phosphate + H(+)</text>
        <dbReference type="Rhea" id="RHEA:56712"/>
        <dbReference type="Rhea" id="RHEA-COMP:14679"/>
        <dbReference type="Rhea" id="RHEA-COMP:14680"/>
        <dbReference type="ChEBI" id="CHEBI:15378"/>
        <dbReference type="ChEBI" id="CHEBI:29950"/>
        <dbReference type="ChEBI" id="CHEBI:57685"/>
        <dbReference type="ChEBI" id="CHEBI:64716"/>
        <dbReference type="ChEBI" id="CHEBI:140658"/>
        <dbReference type="EC" id="2.5.1.145"/>
    </reaction>
</comment>
<comment type="pathway">
    <text evidence="1">Protein modification; lipoprotein biosynthesis (diacylglyceryl transfer).</text>
</comment>
<comment type="subcellular location">
    <subcellularLocation>
        <location evidence="1">Cell inner membrane</location>
        <topology evidence="1">Multi-pass membrane protein</topology>
    </subcellularLocation>
</comment>
<comment type="similarity">
    <text evidence="1">Belongs to the Lgt family.</text>
</comment>